<gene>
    <name evidence="1" type="primary">atpB</name>
    <name type="ordered locus">PA14_73310</name>
</gene>
<accession>Q02DE8</accession>
<evidence type="ECO:0000255" key="1">
    <source>
        <dbReference type="HAMAP-Rule" id="MF_01393"/>
    </source>
</evidence>
<proteinExistence type="inferred from homology"/>
<organism>
    <name type="scientific">Pseudomonas aeruginosa (strain UCBPP-PA14)</name>
    <dbReference type="NCBI Taxonomy" id="208963"/>
    <lineage>
        <taxon>Bacteria</taxon>
        <taxon>Pseudomonadati</taxon>
        <taxon>Pseudomonadota</taxon>
        <taxon>Gammaproteobacteria</taxon>
        <taxon>Pseudomonadales</taxon>
        <taxon>Pseudomonadaceae</taxon>
        <taxon>Pseudomonas</taxon>
    </lineage>
</organism>
<name>ATP6_PSEAB</name>
<sequence length="289" mass="31921">MAAETASGYIQHHLQNLTFGRLPNGDWGFAHTAEQAKEMGFWAFHVDTLGWSVLLGVVFLFIFRLAAKKATSGQPGGLQNFVEVMVEFVDTSVKDTFHGRNPLIAPLALTVFVWIFLLNLIDLVPVDYLPMLAAKITGDEHLFFRAVATTDPNATLGLSISVFALIVFYSIKVKGIGGFLGELTLHPFSSKNIVVQILLIPVNFLLEFVTLIAKPVSLALRLFGNMYAGELIFILIAVMFGSGMFLLSALGVALNWAWAVFHILIITLQAFIFMMLTIVYLSMAHEDNH</sequence>
<comment type="function">
    <text evidence="1">Key component of the proton channel; it plays a direct role in the translocation of protons across the membrane.</text>
</comment>
<comment type="subunit">
    <text evidence="1">F-type ATPases have 2 components, CF(1) - the catalytic core - and CF(0) - the membrane proton channel. CF(1) has five subunits: alpha(3), beta(3), gamma(1), delta(1), epsilon(1). CF(0) has three main subunits: a(1), b(2) and c(9-12). The alpha and beta chains form an alternating ring which encloses part of the gamma chain. CF(1) is attached to CF(0) by a central stalk formed by the gamma and epsilon chains, while a peripheral stalk is formed by the delta and b chains.</text>
</comment>
<comment type="subcellular location">
    <subcellularLocation>
        <location evidence="1">Cell inner membrane</location>
        <topology evidence="1">Multi-pass membrane protein</topology>
    </subcellularLocation>
</comment>
<comment type="similarity">
    <text evidence="1">Belongs to the ATPase A chain family.</text>
</comment>
<protein>
    <recommendedName>
        <fullName evidence="1">ATP synthase subunit a</fullName>
    </recommendedName>
    <alternativeName>
        <fullName evidence="1">ATP synthase F0 sector subunit a</fullName>
    </alternativeName>
    <alternativeName>
        <fullName evidence="1">F-ATPase subunit 6</fullName>
    </alternativeName>
</protein>
<dbReference type="EMBL" id="CP000438">
    <property type="protein sequence ID" value="ABJ14947.1"/>
    <property type="molecule type" value="Genomic_DNA"/>
</dbReference>
<dbReference type="RefSeq" id="WP_003100237.1">
    <property type="nucleotide sequence ID" value="NZ_CP034244.1"/>
</dbReference>
<dbReference type="SMR" id="Q02DE8"/>
<dbReference type="GeneID" id="77224113"/>
<dbReference type="KEGG" id="pau:PA14_73310"/>
<dbReference type="PseudoCAP" id="PA14_73310"/>
<dbReference type="HOGENOM" id="CLU_041018_1_0_6"/>
<dbReference type="BioCyc" id="PAER208963:G1G74-6167-MONOMER"/>
<dbReference type="Proteomes" id="UP000000653">
    <property type="component" value="Chromosome"/>
</dbReference>
<dbReference type="GO" id="GO:0005886">
    <property type="term" value="C:plasma membrane"/>
    <property type="evidence" value="ECO:0007669"/>
    <property type="project" value="UniProtKB-SubCell"/>
</dbReference>
<dbReference type="GO" id="GO:0045259">
    <property type="term" value="C:proton-transporting ATP synthase complex"/>
    <property type="evidence" value="ECO:0007669"/>
    <property type="project" value="UniProtKB-KW"/>
</dbReference>
<dbReference type="GO" id="GO:0046933">
    <property type="term" value="F:proton-transporting ATP synthase activity, rotational mechanism"/>
    <property type="evidence" value="ECO:0007669"/>
    <property type="project" value="UniProtKB-UniRule"/>
</dbReference>
<dbReference type="GO" id="GO:0042777">
    <property type="term" value="P:proton motive force-driven plasma membrane ATP synthesis"/>
    <property type="evidence" value="ECO:0007669"/>
    <property type="project" value="TreeGrafter"/>
</dbReference>
<dbReference type="CDD" id="cd00310">
    <property type="entry name" value="ATP-synt_Fo_a_6"/>
    <property type="match status" value="1"/>
</dbReference>
<dbReference type="FunFam" id="1.20.120.220:FF:000002">
    <property type="entry name" value="ATP synthase subunit a"/>
    <property type="match status" value="1"/>
</dbReference>
<dbReference type="Gene3D" id="1.20.120.220">
    <property type="entry name" value="ATP synthase, F0 complex, subunit A"/>
    <property type="match status" value="1"/>
</dbReference>
<dbReference type="HAMAP" id="MF_01393">
    <property type="entry name" value="ATP_synth_a_bact"/>
    <property type="match status" value="1"/>
</dbReference>
<dbReference type="InterPro" id="IPR045082">
    <property type="entry name" value="ATP_syn_F0_a_bact/chloroplast"/>
</dbReference>
<dbReference type="InterPro" id="IPR000568">
    <property type="entry name" value="ATP_synth_F0_asu"/>
</dbReference>
<dbReference type="InterPro" id="IPR023011">
    <property type="entry name" value="ATP_synth_F0_asu_AS"/>
</dbReference>
<dbReference type="InterPro" id="IPR035908">
    <property type="entry name" value="F0_ATP_A_sf"/>
</dbReference>
<dbReference type="NCBIfam" id="TIGR01131">
    <property type="entry name" value="ATP_synt_6_or_A"/>
    <property type="match status" value="1"/>
</dbReference>
<dbReference type="NCBIfam" id="NF004477">
    <property type="entry name" value="PRK05815.1-1"/>
    <property type="match status" value="1"/>
</dbReference>
<dbReference type="PANTHER" id="PTHR42823">
    <property type="entry name" value="ATP SYNTHASE SUBUNIT A, CHLOROPLASTIC"/>
    <property type="match status" value="1"/>
</dbReference>
<dbReference type="PANTHER" id="PTHR42823:SF3">
    <property type="entry name" value="ATP SYNTHASE SUBUNIT A, CHLOROPLASTIC"/>
    <property type="match status" value="1"/>
</dbReference>
<dbReference type="Pfam" id="PF00119">
    <property type="entry name" value="ATP-synt_A"/>
    <property type="match status" value="1"/>
</dbReference>
<dbReference type="SUPFAM" id="SSF81336">
    <property type="entry name" value="F1F0 ATP synthase subunit A"/>
    <property type="match status" value="1"/>
</dbReference>
<dbReference type="PROSITE" id="PS00449">
    <property type="entry name" value="ATPASE_A"/>
    <property type="match status" value="1"/>
</dbReference>
<feature type="chain" id="PRO_0000362392" description="ATP synthase subunit a">
    <location>
        <begin position="1"/>
        <end position="289"/>
    </location>
</feature>
<feature type="transmembrane region" description="Helical" evidence="1">
    <location>
        <begin position="43"/>
        <end position="63"/>
    </location>
</feature>
<feature type="transmembrane region" description="Helical" evidence="1">
    <location>
        <begin position="104"/>
        <end position="124"/>
    </location>
</feature>
<feature type="transmembrane region" description="Helical" evidence="1">
    <location>
        <begin position="160"/>
        <end position="180"/>
    </location>
</feature>
<feature type="transmembrane region" description="Helical" evidence="1">
    <location>
        <begin position="193"/>
        <end position="213"/>
    </location>
</feature>
<feature type="transmembrane region" description="Helical" evidence="1">
    <location>
        <begin position="232"/>
        <end position="252"/>
    </location>
</feature>
<feature type="transmembrane region" description="Helical" evidence="1">
    <location>
        <begin position="259"/>
        <end position="279"/>
    </location>
</feature>
<reference key="1">
    <citation type="journal article" date="2006" name="Genome Biol.">
        <title>Genomic analysis reveals that Pseudomonas aeruginosa virulence is combinatorial.</title>
        <authorList>
            <person name="Lee D.G."/>
            <person name="Urbach J.M."/>
            <person name="Wu G."/>
            <person name="Liberati N.T."/>
            <person name="Feinbaum R.L."/>
            <person name="Miyata S."/>
            <person name="Diggins L.T."/>
            <person name="He J."/>
            <person name="Saucier M."/>
            <person name="Deziel E."/>
            <person name="Friedman L."/>
            <person name="Li L."/>
            <person name="Grills G."/>
            <person name="Montgomery K."/>
            <person name="Kucherlapati R."/>
            <person name="Rahme L.G."/>
            <person name="Ausubel F.M."/>
        </authorList>
    </citation>
    <scope>NUCLEOTIDE SEQUENCE [LARGE SCALE GENOMIC DNA]</scope>
    <source>
        <strain>UCBPP-PA14</strain>
    </source>
</reference>
<keyword id="KW-0066">ATP synthesis</keyword>
<keyword id="KW-0997">Cell inner membrane</keyword>
<keyword id="KW-1003">Cell membrane</keyword>
<keyword id="KW-0138">CF(0)</keyword>
<keyword id="KW-0375">Hydrogen ion transport</keyword>
<keyword id="KW-0406">Ion transport</keyword>
<keyword id="KW-0472">Membrane</keyword>
<keyword id="KW-0812">Transmembrane</keyword>
<keyword id="KW-1133">Transmembrane helix</keyword>
<keyword id="KW-0813">Transport</keyword>